<evidence type="ECO:0000250" key="1">
    <source>
        <dbReference type="UniProtKB" id="Q9BVC4"/>
    </source>
</evidence>
<evidence type="ECO:0000250" key="2">
    <source>
        <dbReference type="UniProtKB" id="Q9Z2K5"/>
    </source>
</evidence>
<evidence type="ECO:0000305" key="3"/>
<feature type="chain" id="PRO_0000326504" description="Target of rapamycin complex subunit lst8">
    <location>
        <begin position="1"/>
        <end position="326"/>
    </location>
</feature>
<feature type="repeat" description="WD 1">
    <location>
        <begin position="1"/>
        <end position="37"/>
    </location>
</feature>
<feature type="repeat" description="WD 2">
    <location>
        <begin position="40"/>
        <end position="80"/>
    </location>
</feature>
<feature type="repeat" description="WD 3">
    <location>
        <begin position="83"/>
        <end position="122"/>
    </location>
</feature>
<feature type="repeat" description="WD 4">
    <location>
        <begin position="126"/>
        <end position="165"/>
    </location>
</feature>
<feature type="repeat" description="WD 5">
    <location>
        <begin position="168"/>
        <end position="207"/>
    </location>
</feature>
<feature type="repeat" description="WD 6">
    <location>
        <begin position="218"/>
        <end position="257"/>
    </location>
</feature>
<feature type="repeat" description="WD 7">
    <location>
        <begin position="268"/>
        <end position="309"/>
    </location>
</feature>
<feature type="sequence conflict" description="In Ref. 1; CAJ82929." evidence="3" ref="1">
    <original>Q</original>
    <variation>L</variation>
    <location>
        <position position="39"/>
    </location>
</feature>
<comment type="function">
    <text evidence="1">Subunit of both mTORC1 and mTORC2, which regulates cell growth and survival in response to nutrient and hormonal signals. mTORC1 is activated in response to growth factors or amino acids. In response to nutrients, mTORC1 is recruited to the lysosome membrane and promotes protein, lipid and nucleotide synthesis by phosphorylating several substrates, such as ribosomal protein S6 kinase (RPS6KB1 and RPS6KB2) and EIF4EBP1 (4E-BP1). In the same time, it inhibits catabolic pathways by phosphorylating the autophagy initiation components ULK1 and ATG13, as well as transcription factor TFEB, a master regulators of lysosomal biogenesis and autophagy. The mTORC1 complex is inhibited in response to starvation and amino acid depletion. Within mTORC1, MLST8 interacts directly with MTOR and enhances its kinase activity. In nutrient-poor conditions, stabilizes the MTOR-RPTOR interaction and favors RPTOR-mediated inhibition of MTOR activity. As part of the mTORC2 complex, transduces signals from growth factors to pathways involved in proliferation, cytoskeletal organization, lipogenesis and anabolic output. mTORC2 is also activated by growth factors, but seems to be nutrient-insensitive. In response to growth factors, mTORC2 phosphorylates and activates AGC protein kinase family members, including AKT (AKT1, AKT2 and AKT3), PKC (PRKCA, PRKCB and PRKCE) and SGK1. mTORC2 functions upstream of Rho GTPases to regulate the actin cytoskeleton, probably by activating one or more Rho-type guanine nucleotide exchange factors. mTORC2 promotes the serum-induced formation of stress-fibers or F-actin. Within mTORC2, MLST8 acts as a bridge between MAPKAP1/SIN1 and MTOR.</text>
</comment>
<comment type="subunit">
    <text evidence="1">Part of the mechanistic target of rapamycin complex 1 (mTORC1) which contains MTOR, MLST8 and RPTOR. Component of the mechanistic target of rapamycin complex 2 (mTORC2), consisting in two heterotretramers composed of MTOR, MLST8, RICTOR and MAPKAP1/SIN1.</text>
</comment>
<comment type="subcellular location">
    <subcellularLocation>
        <location evidence="1">Lysosome membrane</location>
    </subcellularLocation>
    <subcellularLocation>
        <location evidence="2">Cytoplasm</location>
    </subcellularLocation>
    <text evidence="1">Targeting to lysosomal membrane depends on amino acid availability: mTORC1 is recruited to lysosome membranes via interaction with GTP-bound form of RagA/RRAGA (or RagB/RRAGB) in complex with the GDP-bound form of RagC/RRAGC (or RagD/RRAGD), promoting its mTORC1 recruitment to the lysosomes.</text>
</comment>
<comment type="similarity">
    <text evidence="3">Belongs to the WD repeat LST8 family.</text>
</comment>
<comment type="sequence caution" evidence="3">
    <conflict type="erroneous initiation">
        <sequence resource="EMBL-CDS" id="CAJ82929"/>
    </conflict>
</comment>
<reference key="1">
    <citation type="submission" date="2006-10" db="EMBL/GenBank/DDBJ databases">
        <authorList>
            <consortium name="Sanger Xenopus tropicalis EST/cDNA project"/>
        </authorList>
    </citation>
    <scope>NUCLEOTIDE SEQUENCE [LARGE SCALE MRNA]</scope>
    <source>
        <tissue>Tadpole</tissue>
    </source>
</reference>
<reference key="2">
    <citation type="submission" date="2004-12" db="EMBL/GenBank/DDBJ databases">
        <authorList>
            <consortium name="NIH - Xenopus Gene Collection (XGC) project"/>
        </authorList>
    </citation>
    <scope>NUCLEOTIDE SEQUENCE [LARGE SCALE MRNA]</scope>
    <source>
        <tissue>Tail bud</tissue>
    </source>
</reference>
<name>LST8_XENTR</name>
<organism>
    <name type="scientific">Xenopus tropicalis</name>
    <name type="common">Western clawed frog</name>
    <name type="synonym">Silurana tropicalis</name>
    <dbReference type="NCBI Taxonomy" id="8364"/>
    <lineage>
        <taxon>Eukaryota</taxon>
        <taxon>Metazoa</taxon>
        <taxon>Chordata</taxon>
        <taxon>Craniata</taxon>
        <taxon>Vertebrata</taxon>
        <taxon>Euteleostomi</taxon>
        <taxon>Amphibia</taxon>
        <taxon>Batrachia</taxon>
        <taxon>Anura</taxon>
        <taxon>Pipoidea</taxon>
        <taxon>Pipidae</taxon>
        <taxon>Xenopodinae</taxon>
        <taxon>Xenopus</taxon>
        <taxon>Silurana</taxon>
    </lineage>
</organism>
<dbReference type="EMBL" id="CR760803">
    <property type="protein sequence ID" value="CAJ82929.1"/>
    <property type="status" value="ALT_INIT"/>
    <property type="molecule type" value="mRNA"/>
</dbReference>
<dbReference type="EMBL" id="BC088512">
    <property type="protein sequence ID" value="AAH88512.1"/>
    <property type="molecule type" value="mRNA"/>
</dbReference>
<dbReference type="RefSeq" id="NP_001011443.1">
    <property type="nucleotide sequence ID" value="NM_001011443.1"/>
</dbReference>
<dbReference type="SMR" id="Q5I0B4"/>
<dbReference type="FunCoup" id="Q5I0B4">
    <property type="interactions" value="1494"/>
</dbReference>
<dbReference type="STRING" id="8364.ENSXETP00000035122"/>
<dbReference type="PaxDb" id="8364-ENSXETP00000035110"/>
<dbReference type="DNASU" id="496930"/>
<dbReference type="GeneID" id="496930"/>
<dbReference type="KEGG" id="xtr:496930"/>
<dbReference type="AGR" id="Xenbase:XB-GENE-981763"/>
<dbReference type="CTD" id="64223"/>
<dbReference type="eggNOG" id="KOG0315">
    <property type="taxonomic scope" value="Eukaryota"/>
</dbReference>
<dbReference type="HOGENOM" id="CLU_000288_57_5_1"/>
<dbReference type="InParanoid" id="Q5I0B4"/>
<dbReference type="OMA" id="VQRNYKH"/>
<dbReference type="OrthoDB" id="400at2759"/>
<dbReference type="Reactome" id="R-XTR-1632852">
    <property type="pathway name" value="Macroautophagy"/>
</dbReference>
<dbReference type="Reactome" id="R-XTR-165159">
    <property type="pathway name" value="MTOR signalling"/>
</dbReference>
<dbReference type="Reactome" id="R-XTR-380972">
    <property type="pathway name" value="Energy dependent regulation of mTOR by LKB1-AMPK"/>
</dbReference>
<dbReference type="Reactome" id="R-XTR-5628897">
    <property type="pathway name" value="TP53 Regulates Metabolic Genes"/>
</dbReference>
<dbReference type="Reactome" id="R-XTR-9639288">
    <property type="pathway name" value="Amino acids regulate mTORC1"/>
</dbReference>
<dbReference type="Proteomes" id="UP000008143">
    <property type="component" value="Chromosome 9"/>
</dbReference>
<dbReference type="GO" id="GO:0005737">
    <property type="term" value="C:cytoplasm"/>
    <property type="evidence" value="ECO:0000250"/>
    <property type="project" value="UniProtKB"/>
</dbReference>
<dbReference type="GO" id="GO:0005765">
    <property type="term" value="C:lysosomal membrane"/>
    <property type="evidence" value="ECO:0007669"/>
    <property type="project" value="UniProtKB-SubCell"/>
</dbReference>
<dbReference type="GO" id="GO:0031931">
    <property type="term" value="C:TORC1 complex"/>
    <property type="evidence" value="ECO:0007669"/>
    <property type="project" value="InterPro"/>
</dbReference>
<dbReference type="GO" id="GO:0031932">
    <property type="term" value="C:TORC2 complex"/>
    <property type="evidence" value="ECO:0000250"/>
    <property type="project" value="UniProtKB"/>
</dbReference>
<dbReference type="GO" id="GO:0038203">
    <property type="term" value="P:TORC2 signaling"/>
    <property type="evidence" value="ECO:0000250"/>
    <property type="project" value="UniProtKB"/>
</dbReference>
<dbReference type="CDD" id="cd00200">
    <property type="entry name" value="WD40"/>
    <property type="match status" value="1"/>
</dbReference>
<dbReference type="FunFam" id="2.130.10.10:FF:000086">
    <property type="entry name" value="target of rapamycin complex subunit LST8"/>
    <property type="match status" value="1"/>
</dbReference>
<dbReference type="Gene3D" id="2.130.10.10">
    <property type="entry name" value="YVTN repeat-like/Quinoprotein amine dehydrogenase"/>
    <property type="match status" value="1"/>
</dbReference>
<dbReference type="InterPro" id="IPR037588">
    <property type="entry name" value="MLST8"/>
</dbReference>
<dbReference type="InterPro" id="IPR011047">
    <property type="entry name" value="Quinoprotein_ADH-like_sf"/>
</dbReference>
<dbReference type="InterPro" id="IPR015943">
    <property type="entry name" value="WD40/YVTN_repeat-like_dom_sf"/>
</dbReference>
<dbReference type="InterPro" id="IPR019775">
    <property type="entry name" value="WD40_repeat_CS"/>
</dbReference>
<dbReference type="InterPro" id="IPR001680">
    <property type="entry name" value="WD40_rpt"/>
</dbReference>
<dbReference type="PANTHER" id="PTHR19842">
    <property type="entry name" value="G BETA-LIKE PROTEIN GBL"/>
    <property type="match status" value="1"/>
</dbReference>
<dbReference type="PANTHER" id="PTHR19842:SF0">
    <property type="entry name" value="TARGET OF RAPAMYCIN COMPLEX SUBUNIT LST8"/>
    <property type="match status" value="1"/>
</dbReference>
<dbReference type="Pfam" id="PF00400">
    <property type="entry name" value="WD40"/>
    <property type="match status" value="5"/>
</dbReference>
<dbReference type="SMART" id="SM00320">
    <property type="entry name" value="WD40"/>
    <property type="match status" value="6"/>
</dbReference>
<dbReference type="SUPFAM" id="SSF50998">
    <property type="entry name" value="Quinoprotein alcohol dehydrogenase-like"/>
    <property type="match status" value="1"/>
</dbReference>
<dbReference type="PROSITE" id="PS00678">
    <property type="entry name" value="WD_REPEATS_1"/>
    <property type="match status" value="1"/>
</dbReference>
<dbReference type="PROSITE" id="PS50082">
    <property type="entry name" value="WD_REPEATS_2"/>
    <property type="match status" value="3"/>
</dbReference>
<dbReference type="PROSITE" id="PS50294">
    <property type="entry name" value="WD_REPEATS_REGION"/>
    <property type="match status" value="1"/>
</dbReference>
<protein>
    <recommendedName>
        <fullName>Target of rapamycin complex subunit lst8</fullName>
        <shortName>TORC subunit lst8</shortName>
    </recommendedName>
    <alternativeName>
        <fullName>G protein beta subunit-like</fullName>
        <shortName>Gable</shortName>
        <shortName>Protein GbetaL</shortName>
    </alternativeName>
    <alternativeName>
        <fullName>MTOR associated protein, LST8 homolog</fullName>
    </alternativeName>
</protein>
<accession>Q5I0B4</accession>
<accession>Q28HP0</accession>
<keyword id="KW-0963">Cytoplasm</keyword>
<keyword id="KW-0458">Lysosome</keyword>
<keyword id="KW-0472">Membrane</keyword>
<keyword id="KW-1185">Reference proteome</keyword>
<keyword id="KW-0677">Repeat</keyword>
<keyword id="KW-0853">WD repeat</keyword>
<sequence length="326" mass="36131">MNSNQGTVGSDPVILATAGYDHTVRFWQAHSGICTRTVQHQDSQVNSLEVTPDRSMIAAAGYQHIRMYDLNSNNPNPVINYDGVSKNITSVGFHEDGRWMYTGGEDCMARIWDLRSRNLQCQRIFQVNAPINCVFLHPNQAELIVGDQSGAIHIWDLKTDQNEQLIPETDVSINSVHIDPDASYMAAVNSSGNCFVWNLTGGLGEDLTQLIPKTKIPAHKRCALKCKFSPDSTLLATCSADQTCKIWRTSNFSLMTELSIKSNNPGETSRGWMWDCAFSGDSQYIVTASSDNLARLWCVETGEIKREYSGHQKAVVCLAFNDSVLG</sequence>
<gene>
    <name type="primary">mlst8</name>
    <name type="synonym">gbl</name>
    <name type="synonym">lst8</name>
    <name type="ORF">TTpA012a17.1</name>
</gene>
<proteinExistence type="evidence at transcript level"/>